<comment type="similarity">
    <text evidence="2">Belongs to the SLX4IP family.</text>
</comment>
<gene>
    <name type="primary">slx4ip</name>
</gene>
<keyword id="KW-1185">Reference proteome</keyword>
<protein>
    <recommendedName>
        <fullName>Protein SLX4IP</fullName>
    </recommendedName>
</protein>
<proteinExistence type="evidence at transcript level"/>
<reference key="1">
    <citation type="submission" date="2007-03" db="EMBL/GenBank/DDBJ databases">
        <authorList>
            <consortium name="NIH - Xenopus Gene Collection (XGC) project"/>
        </authorList>
    </citation>
    <scope>NUCLEOTIDE SEQUENCE [LARGE SCALE MRNA]</scope>
    <source>
        <tissue>Embryo</tissue>
    </source>
</reference>
<accession>A4IGL8</accession>
<feature type="chain" id="PRO_0000306122" description="Protein SLX4IP">
    <location>
        <begin position="1"/>
        <end position="398"/>
    </location>
</feature>
<feature type="region of interest" description="Disordered" evidence="1">
    <location>
        <begin position="181"/>
        <end position="306"/>
    </location>
</feature>
<feature type="compositionally biased region" description="Polar residues" evidence="1">
    <location>
        <begin position="276"/>
        <end position="292"/>
    </location>
</feature>
<evidence type="ECO:0000256" key="1">
    <source>
        <dbReference type="SAM" id="MobiDB-lite"/>
    </source>
</evidence>
<evidence type="ECO:0000305" key="2"/>
<dbReference type="EMBL" id="BC135156">
    <property type="protein sequence ID" value="AAI35157.1"/>
    <property type="molecule type" value="mRNA"/>
</dbReference>
<dbReference type="RefSeq" id="NP_001090854.1">
    <property type="nucleotide sequence ID" value="NM_001097385.1"/>
</dbReference>
<dbReference type="FunCoup" id="A4IGL8">
    <property type="interactions" value="1043"/>
</dbReference>
<dbReference type="STRING" id="8364.ENSXETP00000019221"/>
<dbReference type="PaxDb" id="8364-ENSXETP00000060821"/>
<dbReference type="GeneID" id="100038267"/>
<dbReference type="KEGG" id="xtr:100038267"/>
<dbReference type="AGR" id="Xenbase:XB-GENE-980487"/>
<dbReference type="CTD" id="128710"/>
<dbReference type="Xenbase" id="XB-GENE-980487">
    <property type="gene designation" value="slx4ip"/>
</dbReference>
<dbReference type="eggNOG" id="ENOG502QQHZ">
    <property type="taxonomic scope" value="Eukaryota"/>
</dbReference>
<dbReference type="InParanoid" id="A4IGL8"/>
<dbReference type="OrthoDB" id="9933290at2759"/>
<dbReference type="Proteomes" id="UP000008143">
    <property type="component" value="Chromosome 5"/>
</dbReference>
<dbReference type="InterPro" id="IPR031479">
    <property type="entry name" value="SLX4IP"/>
</dbReference>
<dbReference type="PANTHER" id="PTHR28557">
    <property type="entry name" value="PROTEIN SLX4IP"/>
    <property type="match status" value="1"/>
</dbReference>
<dbReference type="PANTHER" id="PTHR28557:SF1">
    <property type="entry name" value="PROTEIN SLX4IP"/>
    <property type="match status" value="1"/>
</dbReference>
<dbReference type="Pfam" id="PF15744">
    <property type="entry name" value="UPF0492"/>
    <property type="match status" value="1"/>
</dbReference>
<sequence>MNKLVVKCGNFAVLVDLQVLPQGTSKDTSWFSDHEKEEVCTLVRDTLDSRVKEYLDSRRQPGQLKRKEYTQASPLILKGNRLRIAAYFIKRWVKLRCVVKRQYRELHVFPDRFVVCASQLEPASSVWVTEAAATLKESCSSGTSEYFAQPKGIEMTNLLTTPAQAVLKNIVRKTKITKDISDEAERDSRMSPSLGLADTGKADANNIQKALSKAQPEEKRAEEPNDYINTENSLGLPVPEVENDVNHRQPSEASSQQKPQCAELKTQDLSKHLSRLSDSAKQTQSLRASVMQQKRRRHSSEGKERCKKSCLTSDTFIQQGMQRNEAQVKDLEHVPLASQTDPVRHVSADRGDTLPSKPAAIISVASKQQQGALSLFSNIHTEQSVKAVLAPLLNKDLP</sequence>
<name>SLX4I_XENTR</name>
<organism>
    <name type="scientific">Xenopus tropicalis</name>
    <name type="common">Western clawed frog</name>
    <name type="synonym">Silurana tropicalis</name>
    <dbReference type="NCBI Taxonomy" id="8364"/>
    <lineage>
        <taxon>Eukaryota</taxon>
        <taxon>Metazoa</taxon>
        <taxon>Chordata</taxon>
        <taxon>Craniata</taxon>
        <taxon>Vertebrata</taxon>
        <taxon>Euteleostomi</taxon>
        <taxon>Amphibia</taxon>
        <taxon>Batrachia</taxon>
        <taxon>Anura</taxon>
        <taxon>Pipoidea</taxon>
        <taxon>Pipidae</taxon>
        <taxon>Xenopodinae</taxon>
        <taxon>Xenopus</taxon>
        <taxon>Silurana</taxon>
    </lineage>
</organism>